<dbReference type="EMBL" id="D89999">
    <property type="protein sequence ID" value="BAA94755.1"/>
    <property type="molecule type" value="mRNA"/>
</dbReference>
<dbReference type="PIR" id="JC7222">
    <property type="entry name" value="JC7222"/>
</dbReference>
<dbReference type="RefSeq" id="NP_990085.1">
    <property type="nucleotide sequence ID" value="NM_204754.1"/>
</dbReference>
<dbReference type="SMR" id="Q9I969"/>
<dbReference type="FunCoup" id="Q9I969">
    <property type="interactions" value="29"/>
</dbReference>
<dbReference type="STRING" id="9031.ENSGALP00000070442"/>
<dbReference type="GlyGen" id="Q9I969">
    <property type="glycosylation" value="2 sites"/>
</dbReference>
<dbReference type="PaxDb" id="9031-ENSGALP00000022390"/>
<dbReference type="GeneID" id="395515"/>
<dbReference type="KEGG" id="gga:395515"/>
<dbReference type="CTD" id="167838"/>
<dbReference type="VEuPathDB" id="HostDB:geneid_395515"/>
<dbReference type="eggNOG" id="KOG1850">
    <property type="taxonomic scope" value="Eukaryota"/>
</dbReference>
<dbReference type="InParanoid" id="Q9I969"/>
<dbReference type="OrthoDB" id="425555at2759"/>
<dbReference type="PhylomeDB" id="Q9I969"/>
<dbReference type="PRO" id="PR:Q9I969"/>
<dbReference type="Proteomes" id="UP000000539">
    <property type="component" value="Unassembled WGS sequence"/>
</dbReference>
<dbReference type="GO" id="GO:0005737">
    <property type="term" value="C:cytoplasm"/>
    <property type="evidence" value="ECO:0000314"/>
    <property type="project" value="AgBase"/>
</dbReference>
<dbReference type="GO" id="GO:0005615">
    <property type="term" value="C:extracellular space"/>
    <property type="evidence" value="ECO:0000314"/>
    <property type="project" value="AgBase"/>
</dbReference>
<dbReference type="GO" id="GO:0030017">
    <property type="term" value="C:sarcomere"/>
    <property type="evidence" value="ECO:0000314"/>
    <property type="project" value="AgBase"/>
</dbReference>
<dbReference type="GO" id="GO:0019905">
    <property type="term" value="F:syntaxin binding"/>
    <property type="evidence" value="ECO:0007669"/>
    <property type="project" value="InterPro"/>
</dbReference>
<dbReference type="GO" id="GO:0010976">
    <property type="term" value="P:positive regulation of neuron projection development"/>
    <property type="evidence" value="ECO:0000314"/>
    <property type="project" value="AgBase"/>
</dbReference>
<dbReference type="InterPro" id="IPR026183">
    <property type="entry name" value="Taxilin_fam"/>
</dbReference>
<dbReference type="PANTHER" id="PTHR16127:SF10">
    <property type="entry name" value="BETA-TAXILIN"/>
    <property type="match status" value="1"/>
</dbReference>
<dbReference type="PANTHER" id="PTHR16127">
    <property type="entry name" value="TAXILIN"/>
    <property type="match status" value="1"/>
</dbReference>
<dbReference type="Pfam" id="PF09728">
    <property type="entry name" value="Taxilin"/>
    <property type="match status" value="1"/>
</dbReference>
<gene>
    <name type="primary">TXLNB</name>
    <name type="synonym">MDP77</name>
</gene>
<proteinExistence type="evidence at transcript level"/>
<protein>
    <recommendedName>
        <fullName>Beta-taxilin</fullName>
    </recommendedName>
    <alternativeName>
        <fullName>Muscle-derived protein 77</fullName>
    </alternativeName>
</protein>
<evidence type="ECO:0000255" key="1"/>
<evidence type="ECO:0000256" key="2">
    <source>
        <dbReference type="SAM" id="MobiDB-lite"/>
    </source>
</evidence>
<evidence type="ECO:0000269" key="3">
    <source>
    </source>
</evidence>
<evidence type="ECO:0000305" key="4"/>
<accession>Q9I969</accession>
<sequence length="676" mass="77021">MENDQFTEKQQQVTTSPTQDNQGQSKAEPVPVSQPLSPTNQTSAQPEMATCDISEELNRQLEDIIKTYGSAASLVEKEGTTAETDKPEKEDVGSMEDAECEDVNEESEKDKPAPGDASRAKEPSASKEQKLEKKILKGLGKEATLLMQSLNKLTTPEEKLDLLFKKYAELLEEHRAEQKQLKYLQKRQAQITKEKDQLQSEHSRAILARSKLESLCRELQRHNKTLKEETIQRAREEDEKRKEITNHFQGTLSEIQAQIEQQSERNMKLCQENTELAEKLKSIIDQYELREEHLDKIFKHRELQQKLVDAKLEQSQEMMKEAEERHQKEKEYLLNQAAEWKLQAKMLKEQETVLQAQITLYSERFEEFQKTLTKSNEVFATFKQEMEKMTKKMKKLEKDTATWKSRFENCNRALLDMIEEKAMRTKEYECFVLKIQRLENLCRALQEERNELYRKIKQAQLPEEVNGNDILEEDDDANTNPSSSEQASIELCAADKNMLQELAEAFRVSHKAEETLPSDGSNPETCNVQMCEAISVPELPSHLTSQPEAGNHCEQFSMSTSAPPEHMPAATENMTTLIENMPKPTKSMPMPPEMVPTPTESVPIPTEGVPTPPKIMPATPESVPTLMQNTSAPLGNMPASTKSTPKAVEHVDDIAELFIPDQPAEQKGDTDMEAVD</sequence>
<feature type="chain" id="PRO_0000189425" description="Beta-taxilin">
    <location>
        <begin position="1"/>
        <end position="676"/>
    </location>
</feature>
<feature type="region of interest" description="Disordered" evidence="2">
    <location>
        <begin position="1"/>
        <end position="55"/>
    </location>
</feature>
<feature type="region of interest" description="Disordered" evidence="2">
    <location>
        <begin position="71"/>
        <end position="131"/>
    </location>
</feature>
<feature type="region of interest" description="Disordered" evidence="2">
    <location>
        <begin position="464"/>
        <end position="486"/>
    </location>
</feature>
<feature type="coiled-coil region" evidence="1">
    <location>
        <begin position="157"/>
        <end position="461"/>
    </location>
</feature>
<feature type="compositionally biased region" description="Polar residues" evidence="2">
    <location>
        <begin position="8"/>
        <end position="25"/>
    </location>
</feature>
<feature type="compositionally biased region" description="Polar residues" evidence="2">
    <location>
        <begin position="34"/>
        <end position="45"/>
    </location>
</feature>
<feature type="compositionally biased region" description="Basic and acidic residues" evidence="2">
    <location>
        <begin position="75"/>
        <end position="92"/>
    </location>
</feature>
<feature type="compositionally biased region" description="Acidic residues" evidence="2">
    <location>
        <begin position="93"/>
        <end position="105"/>
    </location>
</feature>
<feature type="compositionally biased region" description="Basic and acidic residues" evidence="2">
    <location>
        <begin position="106"/>
        <end position="131"/>
    </location>
</feature>
<keyword id="KW-0175">Coiled coil</keyword>
<keyword id="KW-0963">Cytoplasm</keyword>
<keyword id="KW-1185">Reference proteome</keyword>
<reference key="1">
    <citation type="journal article" date="2000" name="Biochem. Biophys. Res. Commun.">
        <title>MDP77: a novel neurite-outgrowth-promoting protein predominantly expressed in chick muscles.</title>
        <authorList>
            <person name="Uyeda A."/>
            <person name="Fukui I."/>
            <person name="Fujimori K."/>
            <person name="Kiyosue K."/>
            <person name="Nishimune H."/>
            <person name="Kasai M."/>
            <person name="Taguchi T."/>
        </authorList>
    </citation>
    <scope>NUCLEOTIDE SEQUENCE [MRNA]</scope>
    <source>
        <tissue>Muscle</tissue>
    </source>
</reference>
<reference key="2">
    <citation type="journal article" date="2002" name="FEBS Lett.">
        <title>Regulatory expression of MDP77 protein in the skeletal and cardiac muscles.</title>
        <authorList>
            <person name="Fujimori K.E."/>
            <person name="Uyeda A."/>
            <person name="Taguchi T."/>
        </authorList>
    </citation>
    <scope>FUNCTION</scope>
    <scope>SUBCELLULAR LOCATION</scope>
    <scope>TISSUE SPECIFICITY</scope>
</reference>
<organism>
    <name type="scientific">Gallus gallus</name>
    <name type="common">Chicken</name>
    <dbReference type="NCBI Taxonomy" id="9031"/>
    <lineage>
        <taxon>Eukaryota</taxon>
        <taxon>Metazoa</taxon>
        <taxon>Chordata</taxon>
        <taxon>Craniata</taxon>
        <taxon>Vertebrata</taxon>
        <taxon>Euteleostomi</taxon>
        <taxon>Archelosauria</taxon>
        <taxon>Archosauria</taxon>
        <taxon>Dinosauria</taxon>
        <taxon>Saurischia</taxon>
        <taxon>Theropoda</taxon>
        <taxon>Coelurosauria</taxon>
        <taxon>Aves</taxon>
        <taxon>Neognathae</taxon>
        <taxon>Galloanserae</taxon>
        <taxon>Galliformes</taxon>
        <taxon>Phasianidae</taxon>
        <taxon>Phasianinae</taxon>
        <taxon>Gallus</taxon>
    </lineage>
</organism>
<name>TXLNB_CHICK</name>
<comment type="function">
    <text evidence="3">Promotes neurite-outgrowth. May be involved in intracellular vesicle traffic.</text>
</comment>
<comment type="subcellular location">
    <subcellularLocation>
        <location evidence="3">Cytoplasm</location>
    </subcellularLocation>
</comment>
<comment type="tissue specificity">
    <text evidence="3">Specifically expressed in skeletal and cardiac muscle.</text>
</comment>
<comment type="similarity">
    <text evidence="4">Belongs to the taxilin family.</text>
</comment>